<feature type="chain" id="PRO_1000023099" description="UDP-N-acetylglucosamine 1-carboxyvinyltransferase">
    <location>
        <begin position="1"/>
        <end position="419"/>
    </location>
</feature>
<feature type="active site" description="Proton donor" evidence="1">
    <location>
        <position position="117"/>
    </location>
</feature>
<feature type="binding site" evidence="1">
    <location>
        <begin position="22"/>
        <end position="23"/>
    </location>
    <ligand>
        <name>phosphoenolpyruvate</name>
        <dbReference type="ChEBI" id="CHEBI:58702"/>
    </ligand>
</feature>
<feature type="binding site" evidence="1">
    <location>
        <position position="93"/>
    </location>
    <ligand>
        <name>UDP-N-acetyl-alpha-D-glucosamine</name>
        <dbReference type="ChEBI" id="CHEBI:57705"/>
    </ligand>
</feature>
<feature type="binding site" evidence="1">
    <location>
        <position position="307"/>
    </location>
    <ligand>
        <name>UDP-N-acetyl-alpha-D-glucosamine</name>
        <dbReference type="ChEBI" id="CHEBI:57705"/>
    </ligand>
</feature>
<feature type="binding site" evidence="1">
    <location>
        <position position="329"/>
    </location>
    <ligand>
        <name>UDP-N-acetyl-alpha-D-glucosamine</name>
        <dbReference type="ChEBI" id="CHEBI:57705"/>
    </ligand>
</feature>
<feature type="modified residue" description="2-(S-cysteinyl)pyruvic acid O-phosphothioketal" evidence="1">
    <location>
        <position position="117"/>
    </location>
</feature>
<name>MURA_SHEB8</name>
<evidence type="ECO:0000255" key="1">
    <source>
        <dbReference type="HAMAP-Rule" id="MF_00111"/>
    </source>
</evidence>
<keyword id="KW-0131">Cell cycle</keyword>
<keyword id="KW-0132">Cell division</keyword>
<keyword id="KW-0133">Cell shape</keyword>
<keyword id="KW-0961">Cell wall biogenesis/degradation</keyword>
<keyword id="KW-0963">Cytoplasm</keyword>
<keyword id="KW-0573">Peptidoglycan synthesis</keyword>
<keyword id="KW-0670">Pyruvate</keyword>
<keyword id="KW-0808">Transferase</keyword>
<protein>
    <recommendedName>
        <fullName evidence="1">UDP-N-acetylglucosamine 1-carboxyvinyltransferase</fullName>
        <ecNumber evidence="1">2.5.1.7</ecNumber>
    </recommendedName>
    <alternativeName>
        <fullName evidence="1">Enoylpyruvate transferase</fullName>
    </alternativeName>
    <alternativeName>
        <fullName evidence="1">UDP-N-acetylglucosamine enolpyruvyl transferase</fullName>
        <shortName evidence="1">EPT</shortName>
    </alternativeName>
</protein>
<proteinExistence type="inferred from homology"/>
<accession>A6WJ66</accession>
<organism>
    <name type="scientific">Shewanella baltica (strain OS185)</name>
    <dbReference type="NCBI Taxonomy" id="402882"/>
    <lineage>
        <taxon>Bacteria</taxon>
        <taxon>Pseudomonadati</taxon>
        <taxon>Pseudomonadota</taxon>
        <taxon>Gammaproteobacteria</taxon>
        <taxon>Alteromonadales</taxon>
        <taxon>Shewanellaceae</taxon>
        <taxon>Shewanella</taxon>
    </lineage>
</organism>
<reference key="1">
    <citation type="submission" date="2007-07" db="EMBL/GenBank/DDBJ databases">
        <title>Complete sequence of chromosome of Shewanella baltica OS185.</title>
        <authorList>
            <consortium name="US DOE Joint Genome Institute"/>
            <person name="Copeland A."/>
            <person name="Lucas S."/>
            <person name="Lapidus A."/>
            <person name="Barry K."/>
            <person name="Glavina del Rio T."/>
            <person name="Dalin E."/>
            <person name="Tice H."/>
            <person name="Pitluck S."/>
            <person name="Sims D."/>
            <person name="Brettin T."/>
            <person name="Bruce D."/>
            <person name="Detter J.C."/>
            <person name="Han C."/>
            <person name="Schmutz J."/>
            <person name="Larimer F."/>
            <person name="Land M."/>
            <person name="Hauser L."/>
            <person name="Kyrpides N."/>
            <person name="Mikhailova N."/>
            <person name="Brettar I."/>
            <person name="Rodrigues J."/>
            <person name="Konstantinidis K."/>
            <person name="Tiedje J."/>
            <person name="Richardson P."/>
        </authorList>
    </citation>
    <scope>NUCLEOTIDE SEQUENCE [LARGE SCALE GENOMIC DNA]</scope>
    <source>
        <strain>OS185</strain>
    </source>
</reference>
<gene>
    <name evidence="1" type="primary">murA</name>
    <name type="ordered locus">Shew185_0698</name>
</gene>
<dbReference type="EC" id="2.5.1.7" evidence="1"/>
<dbReference type="EMBL" id="CP000753">
    <property type="protein sequence ID" value="ABS06855.1"/>
    <property type="molecule type" value="Genomic_DNA"/>
</dbReference>
<dbReference type="RefSeq" id="WP_006083057.1">
    <property type="nucleotide sequence ID" value="NC_009665.1"/>
</dbReference>
<dbReference type="SMR" id="A6WJ66"/>
<dbReference type="GeneID" id="11774577"/>
<dbReference type="KEGG" id="sbm:Shew185_0698"/>
<dbReference type="HOGENOM" id="CLU_027387_0_0_6"/>
<dbReference type="UniPathway" id="UPA00219"/>
<dbReference type="GO" id="GO:0005737">
    <property type="term" value="C:cytoplasm"/>
    <property type="evidence" value="ECO:0007669"/>
    <property type="project" value="UniProtKB-SubCell"/>
</dbReference>
<dbReference type="GO" id="GO:0008760">
    <property type="term" value="F:UDP-N-acetylglucosamine 1-carboxyvinyltransferase activity"/>
    <property type="evidence" value="ECO:0007669"/>
    <property type="project" value="UniProtKB-UniRule"/>
</dbReference>
<dbReference type="GO" id="GO:0051301">
    <property type="term" value="P:cell division"/>
    <property type="evidence" value="ECO:0007669"/>
    <property type="project" value="UniProtKB-KW"/>
</dbReference>
<dbReference type="GO" id="GO:0071555">
    <property type="term" value="P:cell wall organization"/>
    <property type="evidence" value="ECO:0007669"/>
    <property type="project" value="UniProtKB-KW"/>
</dbReference>
<dbReference type="GO" id="GO:0009252">
    <property type="term" value="P:peptidoglycan biosynthetic process"/>
    <property type="evidence" value="ECO:0007669"/>
    <property type="project" value="UniProtKB-UniRule"/>
</dbReference>
<dbReference type="GO" id="GO:0008360">
    <property type="term" value="P:regulation of cell shape"/>
    <property type="evidence" value="ECO:0007669"/>
    <property type="project" value="UniProtKB-KW"/>
</dbReference>
<dbReference type="GO" id="GO:0019277">
    <property type="term" value="P:UDP-N-acetylgalactosamine biosynthetic process"/>
    <property type="evidence" value="ECO:0007669"/>
    <property type="project" value="InterPro"/>
</dbReference>
<dbReference type="CDD" id="cd01555">
    <property type="entry name" value="UdpNAET"/>
    <property type="match status" value="1"/>
</dbReference>
<dbReference type="FunFam" id="3.65.10.10:FF:000002">
    <property type="entry name" value="UDP-N-acetylglucosamine 1-carboxyvinyltransferase"/>
    <property type="match status" value="1"/>
</dbReference>
<dbReference type="Gene3D" id="3.65.10.10">
    <property type="entry name" value="Enolpyruvate transferase domain"/>
    <property type="match status" value="2"/>
</dbReference>
<dbReference type="HAMAP" id="MF_00111">
    <property type="entry name" value="MurA"/>
    <property type="match status" value="1"/>
</dbReference>
<dbReference type="InterPro" id="IPR001986">
    <property type="entry name" value="Enolpyruvate_Tfrase_dom"/>
</dbReference>
<dbReference type="InterPro" id="IPR036968">
    <property type="entry name" value="Enolpyruvate_Tfrase_sf"/>
</dbReference>
<dbReference type="InterPro" id="IPR050068">
    <property type="entry name" value="MurA_subfamily"/>
</dbReference>
<dbReference type="InterPro" id="IPR013792">
    <property type="entry name" value="RNA3'P_cycl/enolpyr_Trfase_a/b"/>
</dbReference>
<dbReference type="InterPro" id="IPR005750">
    <property type="entry name" value="UDP_GlcNAc_COvinyl_MurA"/>
</dbReference>
<dbReference type="NCBIfam" id="TIGR01072">
    <property type="entry name" value="murA"/>
    <property type="match status" value="1"/>
</dbReference>
<dbReference type="NCBIfam" id="NF006873">
    <property type="entry name" value="PRK09369.1"/>
    <property type="match status" value="1"/>
</dbReference>
<dbReference type="PANTHER" id="PTHR43783">
    <property type="entry name" value="UDP-N-ACETYLGLUCOSAMINE 1-CARBOXYVINYLTRANSFERASE"/>
    <property type="match status" value="1"/>
</dbReference>
<dbReference type="PANTHER" id="PTHR43783:SF1">
    <property type="entry name" value="UDP-N-ACETYLGLUCOSAMINE 1-CARBOXYVINYLTRANSFERASE"/>
    <property type="match status" value="1"/>
</dbReference>
<dbReference type="Pfam" id="PF00275">
    <property type="entry name" value="EPSP_synthase"/>
    <property type="match status" value="1"/>
</dbReference>
<dbReference type="SUPFAM" id="SSF55205">
    <property type="entry name" value="EPT/RTPC-like"/>
    <property type="match status" value="1"/>
</dbReference>
<comment type="function">
    <text evidence="1">Cell wall formation. Adds enolpyruvyl to UDP-N-acetylglucosamine.</text>
</comment>
<comment type="catalytic activity">
    <reaction evidence="1">
        <text>phosphoenolpyruvate + UDP-N-acetyl-alpha-D-glucosamine = UDP-N-acetyl-3-O-(1-carboxyvinyl)-alpha-D-glucosamine + phosphate</text>
        <dbReference type="Rhea" id="RHEA:18681"/>
        <dbReference type="ChEBI" id="CHEBI:43474"/>
        <dbReference type="ChEBI" id="CHEBI:57705"/>
        <dbReference type="ChEBI" id="CHEBI:58702"/>
        <dbReference type="ChEBI" id="CHEBI:68483"/>
        <dbReference type="EC" id="2.5.1.7"/>
    </reaction>
</comment>
<comment type="pathway">
    <text evidence="1">Cell wall biogenesis; peptidoglycan biosynthesis.</text>
</comment>
<comment type="subcellular location">
    <subcellularLocation>
        <location evidence="1">Cytoplasm</location>
    </subcellularLocation>
</comment>
<comment type="similarity">
    <text evidence="1">Belongs to the EPSP synthase family. MurA subfamily.</text>
</comment>
<sequence>MDKLTIQASPPLAGDVIISGAKNAALPILMAGVLAETDFVVSNVPNLRDVTTSCKLLRCLGAEVTELGDGQIRISTTNLNEFCAPYDLVKTMRASILILGPLLARYGTADVSLPGGCAIGARPVNLHLHGLEMMGAKIEVKEGYIKARVDGRLKGAHIFMDMVSVGATENLLMAAALADGETVIENAAREPEVIDLANCLIAMGAKITGVGSATLRIQGVERLQGCNYRVMPDRIETGSFLVAAAVTRGRIRCLKADPASLESVIAKLEDAGAKITTGEDWIELDMQGKRPKAVNIKTAPYPGFPTDMQAQFCVLNALAQGTATITETIFENRFMHVPELIRMGATMELEGNTCIIQGIESLSGAQVMATDLRASASLVIAGLVADGKTIVDRIYHLDRGYEHIENKFQGLGAQVVRTQ</sequence>